<keyword id="KW-0067">ATP-binding</keyword>
<keyword id="KW-0347">Helicase</keyword>
<keyword id="KW-0378">Hydrolase</keyword>
<keyword id="KW-0511">Multifunctional enzyme</keyword>
<keyword id="KW-0547">Nucleotide-binding</keyword>
<keyword id="KW-0548">Nucleotidyltransferase</keyword>
<keyword id="KW-1185">Reference proteome</keyword>
<keyword id="KW-0696">RNA-directed RNA polymerase</keyword>
<keyword id="KW-0808">Transferase</keyword>
<keyword id="KW-0693">Viral RNA replication</keyword>
<dbReference type="EC" id="2.7.7.48"/>
<dbReference type="EC" id="3.6.4.13"/>
<dbReference type="EMBL" id="D13747">
    <property type="protein sequence ID" value="BAA02891.1"/>
    <property type="molecule type" value="Genomic_RNA"/>
</dbReference>
<dbReference type="PIR" id="JT0470">
    <property type="entry name" value="RRWGNV"/>
</dbReference>
<dbReference type="RefSeq" id="NP_040778.1">
    <property type="nucleotide sequence ID" value="NC_001441.1"/>
</dbReference>
<dbReference type="GeneID" id="1494016"/>
<dbReference type="KEGG" id="vg:1494016"/>
<dbReference type="Proteomes" id="UP000008865">
    <property type="component" value="Genome"/>
</dbReference>
<dbReference type="GO" id="GO:0005524">
    <property type="term" value="F:ATP binding"/>
    <property type="evidence" value="ECO:0007669"/>
    <property type="project" value="UniProtKB-KW"/>
</dbReference>
<dbReference type="GO" id="GO:0016887">
    <property type="term" value="F:ATP hydrolysis activity"/>
    <property type="evidence" value="ECO:0007669"/>
    <property type="project" value="RHEA"/>
</dbReference>
<dbReference type="GO" id="GO:0008174">
    <property type="term" value="F:mRNA methyltransferase activity"/>
    <property type="evidence" value="ECO:0007669"/>
    <property type="project" value="InterPro"/>
</dbReference>
<dbReference type="GO" id="GO:0003723">
    <property type="term" value="F:RNA binding"/>
    <property type="evidence" value="ECO:0007669"/>
    <property type="project" value="InterPro"/>
</dbReference>
<dbReference type="GO" id="GO:0003724">
    <property type="term" value="F:RNA helicase activity"/>
    <property type="evidence" value="ECO:0007669"/>
    <property type="project" value="UniProtKB-EC"/>
</dbReference>
<dbReference type="GO" id="GO:0003968">
    <property type="term" value="F:RNA-directed RNA polymerase activity"/>
    <property type="evidence" value="ECO:0007669"/>
    <property type="project" value="UniProtKB-KW"/>
</dbReference>
<dbReference type="GO" id="GO:0006351">
    <property type="term" value="P:DNA-templated transcription"/>
    <property type="evidence" value="ECO:0007669"/>
    <property type="project" value="InterPro"/>
</dbReference>
<dbReference type="GO" id="GO:0016556">
    <property type="term" value="P:mRNA modification"/>
    <property type="evidence" value="ECO:0007669"/>
    <property type="project" value="InterPro"/>
</dbReference>
<dbReference type="GO" id="GO:0006396">
    <property type="term" value="P:RNA processing"/>
    <property type="evidence" value="ECO:0007669"/>
    <property type="project" value="InterPro"/>
</dbReference>
<dbReference type="GO" id="GO:0039694">
    <property type="term" value="P:viral RNA genome replication"/>
    <property type="evidence" value="ECO:0007669"/>
    <property type="project" value="InterPro"/>
</dbReference>
<dbReference type="CDD" id="cd23246">
    <property type="entry name" value="Alphaflexiviridae_RdRp"/>
    <property type="match status" value="1"/>
</dbReference>
<dbReference type="InterPro" id="IPR027351">
    <property type="entry name" value="(+)RNA_virus_helicase_core_dom"/>
</dbReference>
<dbReference type="InterPro" id="IPR002588">
    <property type="entry name" value="Alphavirus-like_MT_dom"/>
</dbReference>
<dbReference type="InterPro" id="IPR043502">
    <property type="entry name" value="DNA/RNA_pol_sf"/>
</dbReference>
<dbReference type="InterPro" id="IPR027417">
    <property type="entry name" value="P-loop_NTPase"/>
</dbReference>
<dbReference type="InterPro" id="IPR001788">
    <property type="entry name" value="RNA-dep_RNA_pol_alsuvir"/>
</dbReference>
<dbReference type="InterPro" id="IPR007094">
    <property type="entry name" value="RNA-dir_pol_PSvirus"/>
</dbReference>
<dbReference type="Pfam" id="PF00978">
    <property type="entry name" value="RdRP_2"/>
    <property type="match status" value="1"/>
</dbReference>
<dbReference type="Pfam" id="PF01443">
    <property type="entry name" value="Viral_helicase1"/>
    <property type="match status" value="1"/>
</dbReference>
<dbReference type="Pfam" id="PF01660">
    <property type="entry name" value="Vmethyltransf"/>
    <property type="match status" value="1"/>
</dbReference>
<dbReference type="SUPFAM" id="SSF56672">
    <property type="entry name" value="DNA/RNA polymerases"/>
    <property type="match status" value="1"/>
</dbReference>
<dbReference type="SUPFAM" id="SSF52540">
    <property type="entry name" value="P-loop containing nucleoside triphosphate hydrolases"/>
    <property type="match status" value="1"/>
</dbReference>
<dbReference type="PROSITE" id="PS51743">
    <property type="entry name" value="ALPHAVIRUS_MT"/>
    <property type="match status" value="1"/>
</dbReference>
<dbReference type="PROSITE" id="PS51657">
    <property type="entry name" value="PSRV_HELICASE"/>
    <property type="match status" value="1"/>
</dbReference>
<dbReference type="PROSITE" id="PS50507">
    <property type="entry name" value="RDRP_SSRNA_POS"/>
    <property type="match status" value="1"/>
</dbReference>
<protein>
    <recommendedName>
        <fullName>RNA replication protein</fullName>
    </recommendedName>
    <alternativeName>
        <fullName>186 kDa protein</fullName>
    </alternativeName>
    <alternativeName>
        <fullName>ORF1 protein</fullName>
    </alternativeName>
    <domain>
        <recommendedName>
            <fullName>RNA-directed RNA polymerase</fullName>
            <ecNumber>2.7.7.48</ecNumber>
        </recommendedName>
    </domain>
    <domain>
        <recommendedName>
            <fullName>Helicase</fullName>
            <ecNumber>3.6.4.13</ecNumber>
        </recommendedName>
    </domain>
</protein>
<organismHost>
    <name type="scientific">Narcissus pseudonarcissus</name>
    <name type="common">Daffodil</name>
    <dbReference type="NCBI Taxonomy" id="39639"/>
</organismHost>
<reference key="1">
    <citation type="journal article" date="1989" name="J. Gen. Virol.">
        <title>Nucleotide sequence of narcissus mosaic virus RNA.</title>
        <authorList>
            <person name="Zuidema D."/>
            <person name="Linthorst H.J.M."/>
            <person name="Huisman M.J."/>
            <person name="Asjes C.J."/>
            <person name="Bol J.F."/>
        </authorList>
    </citation>
    <scope>NUCLEOTIDE SEQUENCE [GENOMIC RNA]</scope>
</reference>
<accession>P15095</accession>
<sequence>MAKVRAALERIRDPSVQTALSEAAYTHVRPVLKESLVNCPYALSNDEADCLESFGITVNPYANQTHTHAACKVIENRMLEIVGMHLPKHSCTMLFLKRSKLRYMRRAAILKDVFLNKDVEPKDLFRYDRDTIRSRLQDIDTKIAYMSDTLHFMSRREIVQLFEDSPKLETLLATVVLPVEALHKRTSLYPSLYSINYSAKGFEYIPGNHGGGSYFHPYTTLEWLKVRMINAEDFHKLSTGFILTFQLVESLGANHLFIVQKAKLLTPQMRTFCRDSLVTLPQVFCPAAMNANRPLSKTKAMQMLLYCKSVKQVTERDIYAKIRQIIPTSELELYDPDEIVHLANYFFFVSSLDSITCYEDLLSSDIWMRLTRPLRTAVRKFVELFKGKQDFDKLLIALKWQPFSYSLEPVDFTAYFVSRRVRTLAKMEDISWHQAAELARRLESEPDLLSWEDLCSKPIADPLASVSTPPLATLTSPAISESRVTDTSSPKLTNISVESILHPTSSNHATIAESLNPKFCGWTRGDFHHMIVNQPSDRLKGCRSWSYTTSPDVDLMLENLLLTPIPWESRLSDILLTLNTPANACCIQILDCSAASAWVDWSVQPIKTFPVAFVGMGETTLTFEDDSTLPLKEGEFVFFPPEWLARHKYQIKTASNLHLCATFLVLDTTLLGETLANNCIEPEPLRPTASRKSCQPTPSVDKSGADSPPEKQIVTPIVDAAVLSCRPKLQDVTKPTKVLMAAETSDSVADSLPWASWVNLLQKHGFKGNQQQIAQDGQLIIPISDIRKLPHIPFPEEVPETLRETLKNIKRFPVEITMQHKRAGSYDSDIKNNRTGKLLSQMDNKWKAAFAYKLQQEDRKVCGTIIHGCGGSGKSFAIQEWMRSLKEDQSVVTVVTPTVLLRNDWQTKLPILPADVFKTFEKSVIQPCNPILVFDDYTKLPPGLIESVVMHHQNVVFIILTGDNRQSVYHETNPEAYIAALPEAVEIFSPYCEFYLNATHRNVKDLANKLGVYSEREGKLKVNFASHHLKASRIPMLVPSTMKRNAMFDMGHHSMTYAGCQGLTAPKIQILLDNHTQFCSERVLYTCLSRAVDRIHFINTGPTTGDYWAKLESTPYLKAFIDTYRDEKTEVYNSQPASAEPTEPEAPATHFPTAPKPLLEPLVEKLTDKEAREIFSPAFGHSNAIQTEDSVVQLFQHQQAKDETLYWATIDTRLAISTPEANLREFNMKRDIGDILFMNYAKLMCLPPEPVPFEERLWKISADEVRNTYISKPIGNLVNAASRQSPDFPKNKIALFLKSQWVKKTEKLGTLKVKPGQTIASFMQETVMLYGTMARYLRKMRRRFQPDNIFINCETTPEDLDKFIKSQWDFSRPAHTNDFTAFDQSQDGAMLQFEVIKAKFFNIPAEIIEGYIYIKLNAAIFLGTLGIMRLSGEGPTFDANTECSIAYNATRFHITDDTAQVYAGDDMALDRVSIEKDSFNRLEKQLKLTSKPMFPKQVKGDYAEFCGWVMTPAGIIKHSLKMHASIQLQKKINNIKESARSYALDLRYAYKLGDELQEHLNEVEADYHQQSVRDMHLLHQQDVLNKGSASPPHVFEKTADANTAGSSKTHKRNALKKKKQTRIAEILPSPDATGLSSLPFRFF</sequence>
<feature type="chain" id="PRO_0000222549" description="RNA replication protein">
    <location>
        <begin position="1"/>
        <end position="1643"/>
    </location>
</feature>
<feature type="domain" description="Alphavirus-like MT" evidence="3">
    <location>
        <begin position="59"/>
        <end position="224"/>
    </location>
</feature>
<feature type="domain" description="(+)RNA virus helicase ATP-binding">
    <location>
        <begin position="828"/>
        <end position="996"/>
    </location>
</feature>
<feature type="domain" description="(+)RNA virus helicase C-terminal">
    <location>
        <begin position="997"/>
        <end position="1132"/>
    </location>
</feature>
<feature type="domain" description="RdRp catalytic" evidence="2">
    <location>
        <begin position="1372"/>
        <end position="1479"/>
    </location>
</feature>
<feature type="region of interest" description="Disordered" evidence="4">
    <location>
        <begin position="686"/>
        <end position="711"/>
    </location>
</feature>
<feature type="region of interest" description="Disordered" evidence="4">
    <location>
        <begin position="1131"/>
        <end position="1155"/>
    </location>
</feature>
<feature type="region of interest" description="Disordered" evidence="4">
    <location>
        <begin position="1587"/>
        <end position="1620"/>
    </location>
</feature>
<feature type="compositionally biased region" description="Polar residues" evidence="4">
    <location>
        <begin position="690"/>
        <end position="700"/>
    </location>
</feature>
<feature type="compositionally biased region" description="Low complexity" evidence="4">
    <location>
        <begin position="1136"/>
        <end position="1155"/>
    </location>
</feature>
<feature type="compositionally biased region" description="Basic residues" evidence="4">
    <location>
        <begin position="1608"/>
        <end position="1620"/>
    </location>
</feature>
<feature type="binding site" evidence="1">
    <location>
        <begin position="868"/>
        <end position="875"/>
    </location>
    <ligand>
        <name>ATP</name>
        <dbReference type="ChEBI" id="CHEBI:30616"/>
    </ligand>
</feature>
<organism>
    <name type="scientific">Narcissus mosaic virus</name>
    <name type="common">NMV</name>
    <dbReference type="NCBI Taxonomy" id="12180"/>
    <lineage>
        <taxon>Viruses</taxon>
        <taxon>Riboviria</taxon>
        <taxon>Orthornavirae</taxon>
        <taxon>Kitrinoviricota</taxon>
        <taxon>Alsuviricetes</taxon>
        <taxon>Tymovirales</taxon>
        <taxon>Alphaflexiviridae</taxon>
        <taxon>Potexvirus</taxon>
    </lineage>
</organism>
<proteinExistence type="inferred from homology"/>
<name>RDRP_NMV</name>
<evidence type="ECO:0000255" key="1"/>
<evidence type="ECO:0000255" key="2">
    <source>
        <dbReference type="PROSITE-ProRule" id="PRU00539"/>
    </source>
</evidence>
<evidence type="ECO:0000255" key="3">
    <source>
        <dbReference type="PROSITE-ProRule" id="PRU01079"/>
    </source>
</evidence>
<evidence type="ECO:0000256" key="4">
    <source>
        <dbReference type="SAM" id="MobiDB-lite"/>
    </source>
</evidence>
<evidence type="ECO:0000305" key="5"/>
<comment type="function">
    <text evidence="5">RNA replication. The central part of this protein possibly functions as an ATP-binding helicase (Probable).</text>
</comment>
<comment type="catalytic activity">
    <reaction evidence="2">
        <text>RNA(n) + a ribonucleoside 5'-triphosphate = RNA(n+1) + diphosphate</text>
        <dbReference type="Rhea" id="RHEA:21248"/>
        <dbReference type="Rhea" id="RHEA-COMP:14527"/>
        <dbReference type="Rhea" id="RHEA-COMP:17342"/>
        <dbReference type="ChEBI" id="CHEBI:33019"/>
        <dbReference type="ChEBI" id="CHEBI:61557"/>
        <dbReference type="ChEBI" id="CHEBI:140395"/>
        <dbReference type="EC" id="2.7.7.48"/>
    </reaction>
</comment>
<comment type="catalytic activity">
    <reaction>
        <text>ATP + H2O = ADP + phosphate + H(+)</text>
        <dbReference type="Rhea" id="RHEA:13065"/>
        <dbReference type="ChEBI" id="CHEBI:15377"/>
        <dbReference type="ChEBI" id="CHEBI:15378"/>
        <dbReference type="ChEBI" id="CHEBI:30616"/>
        <dbReference type="ChEBI" id="CHEBI:43474"/>
        <dbReference type="ChEBI" id="CHEBI:456216"/>
        <dbReference type="EC" id="3.6.4.13"/>
    </reaction>
</comment>
<comment type="similarity">
    <text evidence="5">Belongs to the potexvirus/carlavirus RNA replication protein family.</text>
</comment>